<gene>
    <name evidence="1" type="primary">rpsU</name>
</gene>
<evidence type="ECO:0000255" key="1">
    <source>
        <dbReference type="HAMAP-Rule" id="MF_00358"/>
    </source>
</evidence>
<evidence type="ECO:0000305" key="2"/>
<reference key="1">
    <citation type="submission" date="2002-12" db="EMBL/GenBank/DDBJ databases">
        <title>A novel approach to the study of the phytoplasma genome and the characterization of sixty phytoplasmal genes.</title>
        <authorList>
            <person name="Melamed S."/>
            <person name="Tanne E."/>
            <person name="Ben-Haim R."/>
            <person name="Edelbaum O."/>
            <person name="Yogev D."/>
            <person name="Sela I."/>
        </authorList>
    </citation>
    <scope>NUCLEOTIDE SEQUENCE [GENOMIC DNA]</scope>
</reference>
<accession>Q847R1</accession>
<organism>
    <name type="scientific">Aster yellows phytoplasma</name>
    <dbReference type="NCBI Taxonomy" id="35779"/>
    <lineage>
        <taxon>Bacteria</taxon>
        <taxon>Bacillati</taxon>
        <taxon>Mycoplasmatota</taxon>
        <taxon>Mollicutes</taxon>
        <taxon>Acholeplasmatales</taxon>
        <taxon>Acholeplasmataceae</taxon>
        <taxon>Candidatus Phytoplasma</taxon>
        <taxon>16SrI (Aster yellows group)</taxon>
    </lineage>
</organism>
<protein>
    <recommendedName>
        <fullName evidence="1">Small ribosomal subunit protein bS21</fullName>
    </recommendedName>
    <alternativeName>
        <fullName evidence="2">30S ribosomal protein S21</fullName>
    </alternativeName>
</protein>
<name>RS21_ASTYP</name>
<dbReference type="EMBL" id="AY191288">
    <property type="protein sequence ID" value="AAO61975.1"/>
    <property type="molecule type" value="Genomic_DNA"/>
</dbReference>
<dbReference type="SMR" id="Q847R1"/>
<dbReference type="GO" id="GO:1990904">
    <property type="term" value="C:ribonucleoprotein complex"/>
    <property type="evidence" value="ECO:0007669"/>
    <property type="project" value="UniProtKB-KW"/>
</dbReference>
<dbReference type="GO" id="GO:0005840">
    <property type="term" value="C:ribosome"/>
    <property type="evidence" value="ECO:0007669"/>
    <property type="project" value="UniProtKB-KW"/>
</dbReference>
<dbReference type="GO" id="GO:0003735">
    <property type="term" value="F:structural constituent of ribosome"/>
    <property type="evidence" value="ECO:0007669"/>
    <property type="project" value="InterPro"/>
</dbReference>
<dbReference type="GO" id="GO:0006412">
    <property type="term" value="P:translation"/>
    <property type="evidence" value="ECO:0007669"/>
    <property type="project" value="UniProtKB-UniRule"/>
</dbReference>
<dbReference type="Gene3D" id="1.20.5.1150">
    <property type="entry name" value="Ribosomal protein S8"/>
    <property type="match status" value="1"/>
</dbReference>
<dbReference type="HAMAP" id="MF_00358">
    <property type="entry name" value="Ribosomal_bS21"/>
    <property type="match status" value="1"/>
</dbReference>
<dbReference type="InterPro" id="IPR001911">
    <property type="entry name" value="Ribosomal_bS21"/>
</dbReference>
<dbReference type="InterPro" id="IPR038380">
    <property type="entry name" value="Ribosomal_bS21_sf"/>
</dbReference>
<dbReference type="NCBIfam" id="TIGR00030">
    <property type="entry name" value="S21p"/>
    <property type="match status" value="1"/>
</dbReference>
<dbReference type="Pfam" id="PF01165">
    <property type="entry name" value="Ribosomal_S21"/>
    <property type="match status" value="1"/>
</dbReference>
<dbReference type="PRINTS" id="PR00976">
    <property type="entry name" value="RIBOSOMALS21"/>
</dbReference>
<feature type="chain" id="PRO_0000178291" description="Small ribosomal subunit protein bS21">
    <location>
        <begin position="1"/>
        <end position="65"/>
    </location>
</feature>
<keyword id="KW-0687">Ribonucleoprotein</keyword>
<keyword id="KW-0689">Ribosomal protein</keyword>
<comment type="similarity">
    <text evidence="1">Belongs to the bacterial ribosomal protein bS21 family.</text>
</comment>
<proteinExistence type="inferred from homology"/>
<sequence>MKLITYVKEGESIDRVLKKCKQKFDKARIIRKLRERQQYIKPSERKRKILAKAKYREFRKLLADD</sequence>